<feature type="chain" id="PRO_1000017517" description="Large ribosomal subunit protein bL27">
    <location>
        <begin position="1"/>
        <end position="86"/>
    </location>
</feature>
<feature type="region of interest" description="Disordered" evidence="2">
    <location>
        <begin position="1"/>
        <end position="21"/>
    </location>
</feature>
<proteinExistence type="inferred from homology"/>
<protein>
    <recommendedName>
        <fullName evidence="1">Large ribosomal subunit protein bL27</fullName>
    </recommendedName>
    <alternativeName>
        <fullName evidence="3">50S ribosomal protein L27</fullName>
    </alternativeName>
</protein>
<dbReference type="EMBL" id="AM408590">
    <property type="protein sequence ID" value="CAL72449.1"/>
    <property type="molecule type" value="Genomic_DNA"/>
</dbReference>
<dbReference type="RefSeq" id="WP_003412574.1">
    <property type="nucleotide sequence ID" value="NC_008769.1"/>
</dbReference>
<dbReference type="SMR" id="A1KLD7"/>
<dbReference type="GeneID" id="45426431"/>
<dbReference type="KEGG" id="mbb:BCG_2461c"/>
<dbReference type="HOGENOM" id="CLU_095424_4_0_11"/>
<dbReference type="Proteomes" id="UP000001472">
    <property type="component" value="Chromosome"/>
</dbReference>
<dbReference type="GO" id="GO:0022625">
    <property type="term" value="C:cytosolic large ribosomal subunit"/>
    <property type="evidence" value="ECO:0007669"/>
    <property type="project" value="TreeGrafter"/>
</dbReference>
<dbReference type="GO" id="GO:0003735">
    <property type="term" value="F:structural constituent of ribosome"/>
    <property type="evidence" value="ECO:0007669"/>
    <property type="project" value="InterPro"/>
</dbReference>
<dbReference type="GO" id="GO:0006412">
    <property type="term" value="P:translation"/>
    <property type="evidence" value="ECO:0007669"/>
    <property type="project" value="UniProtKB-UniRule"/>
</dbReference>
<dbReference type="FunFam" id="2.40.50.100:FF:000020">
    <property type="entry name" value="50S ribosomal protein L27"/>
    <property type="match status" value="1"/>
</dbReference>
<dbReference type="Gene3D" id="2.40.50.100">
    <property type="match status" value="1"/>
</dbReference>
<dbReference type="HAMAP" id="MF_00539">
    <property type="entry name" value="Ribosomal_bL27"/>
    <property type="match status" value="1"/>
</dbReference>
<dbReference type="InterPro" id="IPR001684">
    <property type="entry name" value="Ribosomal_bL27"/>
</dbReference>
<dbReference type="InterPro" id="IPR018261">
    <property type="entry name" value="Ribosomal_bL27_CS"/>
</dbReference>
<dbReference type="NCBIfam" id="TIGR00062">
    <property type="entry name" value="L27"/>
    <property type="match status" value="1"/>
</dbReference>
<dbReference type="PANTHER" id="PTHR15893:SF0">
    <property type="entry name" value="LARGE RIBOSOMAL SUBUNIT PROTEIN BL27M"/>
    <property type="match status" value="1"/>
</dbReference>
<dbReference type="PANTHER" id="PTHR15893">
    <property type="entry name" value="RIBOSOMAL PROTEIN L27"/>
    <property type="match status" value="1"/>
</dbReference>
<dbReference type="Pfam" id="PF01016">
    <property type="entry name" value="Ribosomal_L27"/>
    <property type="match status" value="1"/>
</dbReference>
<dbReference type="PRINTS" id="PR00063">
    <property type="entry name" value="RIBOSOMALL27"/>
</dbReference>
<dbReference type="SUPFAM" id="SSF110324">
    <property type="entry name" value="Ribosomal L27 protein-like"/>
    <property type="match status" value="1"/>
</dbReference>
<dbReference type="PROSITE" id="PS00831">
    <property type="entry name" value="RIBOSOMAL_L27"/>
    <property type="match status" value="1"/>
</dbReference>
<sequence>MAHKKGASSSRNGRDSAAQRLGVKRYGGQVVKAGEILVRQRGTKFHPGVNVGRGGDDTLFAKTAGAVEFGIKRGRKTVSIVGSTTA</sequence>
<comment type="similarity">
    <text evidence="1">Belongs to the bacterial ribosomal protein bL27 family.</text>
</comment>
<gene>
    <name evidence="1" type="primary">rpmA</name>
    <name type="ordered locus">BCG_2461c</name>
</gene>
<organism>
    <name type="scientific">Mycobacterium bovis (strain BCG / Pasteur 1173P2)</name>
    <dbReference type="NCBI Taxonomy" id="410289"/>
    <lineage>
        <taxon>Bacteria</taxon>
        <taxon>Bacillati</taxon>
        <taxon>Actinomycetota</taxon>
        <taxon>Actinomycetes</taxon>
        <taxon>Mycobacteriales</taxon>
        <taxon>Mycobacteriaceae</taxon>
        <taxon>Mycobacterium</taxon>
        <taxon>Mycobacterium tuberculosis complex</taxon>
    </lineage>
</organism>
<name>RL27_MYCBP</name>
<evidence type="ECO:0000255" key="1">
    <source>
        <dbReference type="HAMAP-Rule" id="MF_00539"/>
    </source>
</evidence>
<evidence type="ECO:0000256" key="2">
    <source>
        <dbReference type="SAM" id="MobiDB-lite"/>
    </source>
</evidence>
<evidence type="ECO:0000305" key="3"/>
<accession>A1KLD7</accession>
<reference key="1">
    <citation type="journal article" date="2007" name="Proc. Natl. Acad. Sci. U.S.A.">
        <title>Genome plasticity of BCG and impact on vaccine efficacy.</title>
        <authorList>
            <person name="Brosch R."/>
            <person name="Gordon S.V."/>
            <person name="Garnier T."/>
            <person name="Eiglmeier K."/>
            <person name="Frigui W."/>
            <person name="Valenti P."/>
            <person name="Dos Santos S."/>
            <person name="Duthoy S."/>
            <person name="Lacroix C."/>
            <person name="Garcia-Pelayo C."/>
            <person name="Inwald J.K."/>
            <person name="Golby P."/>
            <person name="Garcia J.N."/>
            <person name="Hewinson R.G."/>
            <person name="Behr M.A."/>
            <person name="Quail M.A."/>
            <person name="Churcher C."/>
            <person name="Barrell B.G."/>
            <person name="Parkhill J."/>
            <person name="Cole S.T."/>
        </authorList>
    </citation>
    <scope>NUCLEOTIDE SEQUENCE [LARGE SCALE GENOMIC DNA]</scope>
    <source>
        <strain>BCG / Pasteur 1173P2</strain>
    </source>
</reference>
<keyword id="KW-0687">Ribonucleoprotein</keyword>
<keyword id="KW-0689">Ribosomal protein</keyword>